<comment type="cofactor">
    <cofactor evidence="1">
        <name>Mg(2+)</name>
        <dbReference type="ChEBI" id="CHEBI:18420"/>
    </cofactor>
    <text evidence="1">Binds 2 magnesium ions per subunit.</text>
</comment>
<comment type="similarity">
    <text evidence="5">Belongs to the ERI2 family.</text>
</comment>
<feature type="chain" id="PRO_0000338975" description="ERI1 exoribonuclease 2">
    <location>
        <begin position="1"/>
        <end position="555"/>
    </location>
</feature>
<feature type="domain" description="Exonuclease">
    <location>
        <begin position="35"/>
        <end position="222"/>
    </location>
</feature>
<feature type="zinc finger region" description="GRF-type" evidence="3">
    <location>
        <begin position="488"/>
        <end position="534"/>
    </location>
</feature>
<feature type="region of interest" description="Disordered" evidence="4">
    <location>
        <begin position="266"/>
        <end position="319"/>
    </location>
</feature>
<feature type="compositionally biased region" description="Polar residues" evidence="4">
    <location>
        <begin position="290"/>
        <end position="299"/>
    </location>
</feature>
<feature type="active site" description="Proton acceptor" evidence="2">
    <location>
        <position position="41"/>
    </location>
</feature>
<feature type="active site" description="Proton acceptor" evidence="2">
    <location>
        <position position="209"/>
    </location>
</feature>
<feature type="binding site" evidence="1">
    <location>
        <position position="39"/>
    </location>
    <ligand>
        <name>Mg(2+)</name>
        <dbReference type="ChEBI" id="CHEBI:18420"/>
        <label>1</label>
    </ligand>
</feature>
<feature type="binding site" evidence="1">
    <location>
        <position position="39"/>
    </location>
    <ligand>
        <name>Mg(2+)</name>
        <dbReference type="ChEBI" id="CHEBI:18420"/>
        <label>2</label>
    </ligand>
</feature>
<feature type="binding site" evidence="1">
    <location>
        <position position="41"/>
    </location>
    <ligand>
        <name>AMP</name>
        <dbReference type="ChEBI" id="CHEBI:456215"/>
    </ligand>
</feature>
<feature type="binding site" evidence="1">
    <location>
        <position position="41"/>
    </location>
    <ligand>
        <name>Mg(2+)</name>
        <dbReference type="ChEBI" id="CHEBI:18420"/>
        <label>1</label>
    </ligand>
</feature>
<feature type="binding site" evidence="1">
    <location>
        <position position="152"/>
    </location>
    <ligand>
        <name>Mg(2+)</name>
        <dbReference type="ChEBI" id="CHEBI:18420"/>
        <label>2</label>
    </ligand>
</feature>
<feature type="binding site" evidence="1">
    <location>
        <position position="209"/>
    </location>
    <ligand>
        <name>AMP</name>
        <dbReference type="ChEBI" id="CHEBI:456215"/>
    </ligand>
</feature>
<feature type="binding site" evidence="1">
    <location>
        <position position="214"/>
    </location>
    <ligand>
        <name>Mg(2+)</name>
        <dbReference type="ChEBI" id="CHEBI:18420"/>
        <label>1</label>
    </ligand>
</feature>
<feature type="binding site" evidence="3">
    <location>
        <position position="488"/>
    </location>
    <ligand>
        <name>Zn(2+)</name>
        <dbReference type="ChEBI" id="CHEBI:29105"/>
    </ligand>
</feature>
<feature type="binding site" evidence="3">
    <location>
        <position position="490"/>
    </location>
    <ligand>
        <name>Zn(2+)</name>
        <dbReference type="ChEBI" id="CHEBI:29105"/>
    </ligand>
</feature>
<feature type="binding site" evidence="3">
    <location>
        <position position="513"/>
    </location>
    <ligand>
        <name>Zn(2+)</name>
        <dbReference type="ChEBI" id="CHEBI:29105"/>
    </ligand>
</feature>
<feature type="binding site" evidence="3">
    <location>
        <position position="525"/>
    </location>
    <ligand>
        <name>Zn(2+)</name>
        <dbReference type="ChEBI" id="CHEBI:29105"/>
    </ligand>
</feature>
<organism>
    <name type="scientific">Danio rerio</name>
    <name type="common">Zebrafish</name>
    <name type="synonym">Brachydanio rerio</name>
    <dbReference type="NCBI Taxonomy" id="7955"/>
    <lineage>
        <taxon>Eukaryota</taxon>
        <taxon>Metazoa</taxon>
        <taxon>Chordata</taxon>
        <taxon>Craniata</taxon>
        <taxon>Vertebrata</taxon>
        <taxon>Euteleostomi</taxon>
        <taxon>Actinopterygii</taxon>
        <taxon>Neopterygii</taxon>
        <taxon>Teleostei</taxon>
        <taxon>Ostariophysi</taxon>
        <taxon>Cypriniformes</taxon>
        <taxon>Danionidae</taxon>
        <taxon>Danioninae</taxon>
        <taxon>Danio</taxon>
    </lineage>
</organism>
<gene>
    <name type="primary">eri2</name>
    <name type="synonym">exod1</name>
    <name type="ORF">zgc:111991</name>
</gene>
<accession>Q502M8</accession>
<protein>
    <recommendedName>
        <fullName>ERI1 exoribonuclease 2</fullName>
        <ecNumber>3.1.-.-</ecNumber>
    </recommendedName>
    <alternativeName>
        <fullName>Exonuclease domain-containing protein 1</fullName>
    </alternativeName>
</protein>
<reference key="1">
    <citation type="submission" date="2005-05" db="EMBL/GenBank/DDBJ databases">
        <authorList>
            <consortium name="NIH - Zebrafish Gene Collection (ZGC) project"/>
        </authorList>
    </citation>
    <scope>NUCLEOTIDE SEQUENCE [LARGE SCALE MRNA]</scope>
    <source>
        <tissue>Olfactory epithelium</tissue>
    </source>
</reference>
<sequence>MTTKRLAKELGLLRQRSASSSAQRSSVCKQRFSFLIIIDFESTCWREKSSSGQEIIEFPAVLLSVCSGAVESEFHSYVQPQERPVLSAFCTELTGITQDQVDSAPPLHVVLSRFSRWLRSLQEERGVVFLTDSSGAAPSAQLCAFVTWSDWDLGVCLLYECKRKQLSVPEALKNWIDLRATYKLFYNRKPKGLRGALLDLGIEFTGREHSGLVDARNTALLAQRMMTDGCQLSITSPERRAQVKPRPHTRPSGLRERHTHLTNVKNSRDTHTNTNTHLTNVKNSRDTHTNTHTHLTSVKNTRDTHTHTNTHLTNVKSSRDAHTRLPALMNGSIRARHTHTQQTCANSSDTHIASASVCEVLVSPYTLLSVAHTHTHLQARSAALAGLSDTTYDPESPAPCWQDGELLVEEEEPSSYDDVILGAEPEEATPSEPRRCVSSSVFKTPPPLLRSGPLSPLTHSLGRIAAPLSVHAHTHALKQKVKVTSPLCVCGRRARRLTVGNGGPNHGRVFYCCPRRRSNTHTHTCDFFQWESGVLQNTLSMLTTHTPAAAHTHLR</sequence>
<keyword id="KW-0269">Exonuclease</keyword>
<keyword id="KW-0378">Hydrolase</keyword>
<keyword id="KW-0460">Magnesium</keyword>
<keyword id="KW-0479">Metal-binding</keyword>
<keyword id="KW-0540">Nuclease</keyword>
<keyword id="KW-1185">Reference proteome</keyword>
<keyword id="KW-0862">Zinc</keyword>
<keyword id="KW-0863">Zinc-finger</keyword>
<evidence type="ECO:0000250" key="1"/>
<evidence type="ECO:0000255" key="2"/>
<evidence type="ECO:0000255" key="3">
    <source>
        <dbReference type="PROSITE-ProRule" id="PRU01343"/>
    </source>
</evidence>
<evidence type="ECO:0000256" key="4">
    <source>
        <dbReference type="SAM" id="MobiDB-lite"/>
    </source>
</evidence>
<evidence type="ECO:0000305" key="5"/>
<proteinExistence type="evidence at transcript level"/>
<dbReference type="EC" id="3.1.-.-"/>
<dbReference type="EMBL" id="BC095637">
    <property type="protein sequence ID" value="AAH95637.1"/>
    <property type="molecule type" value="mRNA"/>
</dbReference>
<dbReference type="RefSeq" id="NP_001018476.1">
    <property type="nucleotide sequence ID" value="NM_001020640.1"/>
</dbReference>
<dbReference type="SMR" id="Q502M8"/>
<dbReference type="FunCoup" id="Q502M8">
    <property type="interactions" value="936"/>
</dbReference>
<dbReference type="STRING" id="7955.ENSDARP00000134602"/>
<dbReference type="PaxDb" id="7955-ENSDARP00000054440"/>
<dbReference type="GeneID" id="553667"/>
<dbReference type="KEGG" id="dre:553667"/>
<dbReference type="AGR" id="ZFIN:ZDB-GENE-050522-292"/>
<dbReference type="CTD" id="112479"/>
<dbReference type="ZFIN" id="ZDB-GENE-050522-292">
    <property type="gene designation" value="eri2"/>
</dbReference>
<dbReference type="eggNOG" id="KOG0542">
    <property type="taxonomic scope" value="Eukaryota"/>
</dbReference>
<dbReference type="InParanoid" id="Q502M8"/>
<dbReference type="OrthoDB" id="448399at2759"/>
<dbReference type="PhylomeDB" id="Q502M8"/>
<dbReference type="PRO" id="PR:Q502M8"/>
<dbReference type="Proteomes" id="UP000000437">
    <property type="component" value="Chromosome 1"/>
</dbReference>
<dbReference type="GO" id="GO:0000175">
    <property type="term" value="F:3'-5'-RNA exonuclease activity"/>
    <property type="evidence" value="ECO:0000318"/>
    <property type="project" value="GO_Central"/>
</dbReference>
<dbReference type="GO" id="GO:0003676">
    <property type="term" value="F:nucleic acid binding"/>
    <property type="evidence" value="ECO:0007669"/>
    <property type="project" value="InterPro"/>
</dbReference>
<dbReference type="GO" id="GO:0008270">
    <property type="term" value="F:zinc ion binding"/>
    <property type="evidence" value="ECO:0007669"/>
    <property type="project" value="UniProtKB-KW"/>
</dbReference>
<dbReference type="CDD" id="cd06133">
    <property type="entry name" value="ERI-1_3'hExo_like"/>
    <property type="match status" value="1"/>
</dbReference>
<dbReference type="FunFam" id="3.30.420.10:FF:000062">
    <property type="entry name" value="ERI1 exoribonuclease 2 isoform X1"/>
    <property type="match status" value="1"/>
</dbReference>
<dbReference type="Gene3D" id="3.30.420.10">
    <property type="entry name" value="Ribonuclease H-like superfamily/Ribonuclease H"/>
    <property type="match status" value="1"/>
</dbReference>
<dbReference type="InterPro" id="IPR051274">
    <property type="entry name" value="3-5_Exoribonuclease"/>
</dbReference>
<dbReference type="InterPro" id="IPR047201">
    <property type="entry name" value="ERI-1_3'hExo-like"/>
</dbReference>
<dbReference type="InterPro" id="IPR013520">
    <property type="entry name" value="Exonuclease_RNaseT/DNA_pol3"/>
</dbReference>
<dbReference type="InterPro" id="IPR012337">
    <property type="entry name" value="RNaseH-like_sf"/>
</dbReference>
<dbReference type="InterPro" id="IPR036397">
    <property type="entry name" value="RNaseH_sf"/>
</dbReference>
<dbReference type="InterPro" id="IPR010666">
    <property type="entry name" value="Znf_GRF"/>
</dbReference>
<dbReference type="PANTHER" id="PTHR23044">
    <property type="entry name" value="3'-5' EXONUCLEASE ERI1-RELATED"/>
    <property type="match status" value="1"/>
</dbReference>
<dbReference type="PANTHER" id="PTHR23044:SF61">
    <property type="entry name" value="3'-5' EXORIBONUCLEASE 1-RELATED"/>
    <property type="match status" value="1"/>
</dbReference>
<dbReference type="Pfam" id="PF00929">
    <property type="entry name" value="RNase_T"/>
    <property type="match status" value="1"/>
</dbReference>
<dbReference type="Pfam" id="PF06839">
    <property type="entry name" value="Zn_ribbon_GRF"/>
    <property type="match status" value="1"/>
</dbReference>
<dbReference type="SMART" id="SM00479">
    <property type="entry name" value="EXOIII"/>
    <property type="match status" value="1"/>
</dbReference>
<dbReference type="SUPFAM" id="SSF53098">
    <property type="entry name" value="Ribonuclease H-like"/>
    <property type="match status" value="1"/>
</dbReference>
<dbReference type="PROSITE" id="PS51999">
    <property type="entry name" value="ZF_GRF"/>
    <property type="match status" value="1"/>
</dbReference>
<name>ERI2_DANRE</name>